<organismHost>
    <name type="scientific">Homo sapiens</name>
    <name type="common">Human</name>
    <dbReference type="NCBI Taxonomy" id="9606"/>
</organismHost>
<sequence>MAVWHSANGKVYLPPSTPVARVQSTDEYIQRTNIYYHAFSDRLLTVGHPYFNVYDITGNKLEVPKVSGNQHRVFRLKLPDPNRFALADMSVYNPDKERLVWSCRGLEIGRGQPLGVGSTGHPLFNKLKDTENSNSYIKSSKDDRQDTSFDPKQIQMFIVGCTPCIGEHWDKAIPCEKERQDNRLCPPIELKTTYIEDGDMADIGFGNLNFKNLQESRSDVSLDIVNETCKYPDFLKMQNDVYGDACFFYARREQCYARHFFVRGGKTGDDIPDARIDNGTFKNQFFIPGADGQDQKTIGNAMYYPTVSGSLVSSDAQLFNRPFWLQRAQGHNNGILWANQMFITVVDNTRNTNFSISIYNNNGALKDINDYTAEQFREYQRHVEEYEISLILQLCKVPLKAEVLAQINAMNSSLLEDWQLGFVPTPDNPIQDTYRYIDSLATRCPDKTPPKEKEDPYKGLKFWDVDLTERLSLDLDQYSLGRKFLFQAGLQQTTVSGTKSVSYRGFTRGTKRKRKQ</sequence>
<proteinExistence type="inferred from homology"/>
<organism>
    <name type="scientific">Human papillomavirus 36</name>
    <dbReference type="NCBI Taxonomy" id="37957"/>
    <lineage>
        <taxon>Viruses</taxon>
        <taxon>Monodnaviria</taxon>
        <taxon>Shotokuvirae</taxon>
        <taxon>Cossaviricota</taxon>
        <taxon>Papovaviricetes</taxon>
        <taxon>Zurhausenvirales</taxon>
        <taxon>Papillomaviridae</taxon>
        <taxon>Firstpapillomavirinae</taxon>
        <taxon>Betapapillomavirus</taxon>
        <taxon>Betapapillomavirus 1</taxon>
    </lineage>
</organism>
<evidence type="ECO:0000255" key="1">
    <source>
        <dbReference type="HAMAP-Rule" id="MF_04002"/>
    </source>
</evidence>
<comment type="function">
    <text evidence="1">Forms an icosahedral capsid with a T=7 symmetry and a 50 nm diameter. The capsid is composed of 72 pentamers linked to each other by disulfide bonds and associated with L2 proteins. Binds to heparan sulfate proteoglycans on cell surface of basal layer keratinocytes to provide initial virion attachment. This binding mediates a conformational change in the virus capsid that facilitates efficient infection. The virion enters the host cell via endocytosis. During virus trafficking, L1 protein dissociates from the viral DNA and the genomic DNA is released to the host nucleus. The virion assembly takes place within the cell nucleus. Encapsulates the genomic DNA together with protein L2.</text>
</comment>
<comment type="subunit">
    <text evidence="1">Self-assembles into homopentamers. The capsid has an icosahedral symmetry and consists of 72 capsomers, with each capsomer being a pentamer of L1. Interacts with the minor capsid protein L2; this interaction is necessary for viral genome encapsidation. Interacts with protein E2; this interaction enhances E2-dependent replication and transcription activation.</text>
</comment>
<comment type="subcellular location">
    <subcellularLocation>
        <location evidence="1">Virion</location>
    </subcellularLocation>
    <subcellularLocation>
        <location evidence="1">Host nucleus</location>
    </subcellularLocation>
</comment>
<comment type="similarity">
    <text evidence="1">Belongs to the papillomaviridae L1 protein family.</text>
</comment>
<keyword id="KW-0167">Capsid protein</keyword>
<keyword id="KW-1015">Disulfide bond</keyword>
<keyword id="KW-1048">Host nucleus</keyword>
<keyword id="KW-0945">Host-virus interaction</keyword>
<keyword id="KW-0426">Late protein</keyword>
<keyword id="KW-1145">T=7 icosahedral capsid protein</keyword>
<keyword id="KW-1161">Viral attachment to host cell</keyword>
<keyword id="KW-1162">Viral penetration into host cytoplasm</keyword>
<keyword id="KW-0946">Virion</keyword>
<keyword id="KW-1164">Virus endocytosis by host</keyword>
<keyword id="KW-1160">Virus entry into host cell</keyword>
<name>VL1_HPV36</name>
<gene>
    <name evidence="1" type="primary">L1</name>
</gene>
<protein>
    <recommendedName>
        <fullName evidence="1">Major capsid protein L1</fullName>
    </recommendedName>
</protein>
<reference key="1">
    <citation type="submission" date="1995-10" db="EMBL/GenBank/DDBJ databases">
        <authorList>
            <person name="Delius H."/>
        </authorList>
    </citation>
    <scope>NUCLEOTIDE SEQUENCE [GENOMIC DNA]</scope>
</reference>
<reference key="2">
    <citation type="journal article" date="1995" name="J. Virol.">
        <title>Analysis of genomic sequences of 95 papillomavirus types: uniting typing, phylogeny, and taxonomy.</title>
        <authorList>
            <person name="Chan S.-Y."/>
            <person name="Delius H."/>
            <person name="Halpern A.L."/>
            <person name="Bernard H.U."/>
        </authorList>
    </citation>
    <scope>NUCLEOTIDE SEQUENCE [GENOMIC DNA] OF 379-474</scope>
</reference>
<dbReference type="EMBL" id="U31785">
    <property type="protein sequence ID" value="AAA79442.1"/>
    <property type="molecule type" value="Genomic_DNA"/>
</dbReference>
<dbReference type="EMBL" id="U21873">
    <property type="protein sequence ID" value="AAA92834.1"/>
    <property type="molecule type" value="Genomic_DNA"/>
</dbReference>
<dbReference type="SMR" id="P50812"/>
<dbReference type="Proteomes" id="UP000009167">
    <property type="component" value="Genome"/>
</dbReference>
<dbReference type="GO" id="GO:0042025">
    <property type="term" value="C:host cell nucleus"/>
    <property type="evidence" value="ECO:0007669"/>
    <property type="project" value="UniProtKB-SubCell"/>
</dbReference>
<dbReference type="GO" id="GO:0039620">
    <property type="term" value="C:T=7 icosahedral viral capsid"/>
    <property type="evidence" value="ECO:0007669"/>
    <property type="project" value="UniProtKB-UniRule"/>
</dbReference>
<dbReference type="GO" id="GO:0005198">
    <property type="term" value="F:structural molecule activity"/>
    <property type="evidence" value="ECO:0007669"/>
    <property type="project" value="UniProtKB-UniRule"/>
</dbReference>
<dbReference type="GO" id="GO:0075509">
    <property type="term" value="P:endocytosis involved in viral entry into host cell"/>
    <property type="evidence" value="ECO:0007669"/>
    <property type="project" value="UniProtKB-KW"/>
</dbReference>
<dbReference type="GO" id="GO:0019062">
    <property type="term" value="P:virion attachment to host cell"/>
    <property type="evidence" value="ECO:0007669"/>
    <property type="project" value="UniProtKB-UniRule"/>
</dbReference>
<dbReference type="Gene3D" id="2.60.175.20">
    <property type="entry name" value="Major capsid L1 (late) superfamily, Papillomavirus"/>
    <property type="match status" value="2"/>
</dbReference>
<dbReference type="HAMAP" id="MF_04002">
    <property type="entry name" value="PPV_L1"/>
    <property type="match status" value="1"/>
</dbReference>
<dbReference type="InterPro" id="IPR002210">
    <property type="entry name" value="Capsid_L1_Papillomavir"/>
</dbReference>
<dbReference type="InterPro" id="IPR036973">
    <property type="entry name" value="Capsid_L1_sf_Papillomavir"/>
</dbReference>
<dbReference type="InterPro" id="IPR011222">
    <property type="entry name" value="dsDNA_vir_gr_I_capsid"/>
</dbReference>
<dbReference type="Pfam" id="PF00500">
    <property type="entry name" value="Late_protein_L1"/>
    <property type="match status" value="1"/>
</dbReference>
<dbReference type="PRINTS" id="PR00865">
    <property type="entry name" value="HPVCAPSIDL1"/>
</dbReference>
<dbReference type="SUPFAM" id="SSF88648">
    <property type="entry name" value="Group I dsDNA viruses"/>
    <property type="match status" value="1"/>
</dbReference>
<feature type="chain" id="PRO_0000133520" description="Major capsid protein L1">
    <location>
        <begin position="1"/>
        <end position="516"/>
    </location>
</feature>
<feature type="disulfide bond" description="Interchain (with C-444)" evidence="1">
    <location>
        <position position="175"/>
    </location>
</feature>
<feature type="disulfide bond" description="Interchain (with C-175)" evidence="1">
    <location>
        <position position="444"/>
    </location>
</feature>
<accession>P50812</accession>